<proteinExistence type="inferred from homology"/>
<keyword id="KW-1185">Reference proteome</keyword>
<sequence>MICAVYKSRRKVDSYLFVEKRNVFERVPDALMKMFGEPDLVMMLPLMKRDHLGFADINKVKSELAEKGYYLQLPPPKVNLLEQHKLEIGYSRD</sequence>
<name>Y2518_SHESH</name>
<reference key="1">
    <citation type="submission" date="2007-08" db="EMBL/GenBank/DDBJ databases">
        <title>Complete sequence of Shewanella sediminis HAW-EB3.</title>
        <authorList>
            <consortium name="US DOE Joint Genome Institute"/>
            <person name="Copeland A."/>
            <person name="Lucas S."/>
            <person name="Lapidus A."/>
            <person name="Barry K."/>
            <person name="Glavina del Rio T."/>
            <person name="Dalin E."/>
            <person name="Tice H."/>
            <person name="Pitluck S."/>
            <person name="Chertkov O."/>
            <person name="Brettin T."/>
            <person name="Bruce D."/>
            <person name="Detter J.C."/>
            <person name="Han C."/>
            <person name="Schmutz J."/>
            <person name="Larimer F."/>
            <person name="Land M."/>
            <person name="Hauser L."/>
            <person name="Kyrpides N."/>
            <person name="Kim E."/>
            <person name="Zhao J.-S."/>
            <person name="Richardson P."/>
        </authorList>
    </citation>
    <scope>NUCLEOTIDE SEQUENCE [LARGE SCALE GENOMIC DNA]</scope>
    <source>
        <strain>HAW-EB3</strain>
    </source>
</reference>
<dbReference type="EMBL" id="CP000821">
    <property type="protein sequence ID" value="ABV37125.1"/>
    <property type="molecule type" value="Genomic_DNA"/>
</dbReference>
<dbReference type="RefSeq" id="WP_012142858.1">
    <property type="nucleotide sequence ID" value="NC_009831.1"/>
</dbReference>
<dbReference type="SMR" id="A8FWA2"/>
<dbReference type="STRING" id="425104.Ssed_2518"/>
<dbReference type="KEGG" id="sse:Ssed_2518"/>
<dbReference type="eggNOG" id="COG3100">
    <property type="taxonomic scope" value="Bacteria"/>
</dbReference>
<dbReference type="HOGENOM" id="CLU_155118_1_0_6"/>
<dbReference type="OrthoDB" id="7062382at2"/>
<dbReference type="Proteomes" id="UP000002015">
    <property type="component" value="Chromosome"/>
</dbReference>
<dbReference type="Gene3D" id="3.10.510.20">
    <property type="entry name" value="YcgL domain"/>
    <property type="match status" value="1"/>
</dbReference>
<dbReference type="HAMAP" id="MF_01866">
    <property type="entry name" value="UPF0745"/>
    <property type="match status" value="1"/>
</dbReference>
<dbReference type="InterPro" id="IPR038068">
    <property type="entry name" value="YcgL-like_sf"/>
</dbReference>
<dbReference type="InterPro" id="IPR027354">
    <property type="entry name" value="YcgL_dom"/>
</dbReference>
<dbReference type="PANTHER" id="PTHR38109">
    <property type="entry name" value="PROTEIN YCGL"/>
    <property type="match status" value="1"/>
</dbReference>
<dbReference type="PANTHER" id="PTHR38109:SF1">
    <property type="entry name" value="PROTEIN YCGL"/>
    <property type="match status" value="1"/>
</dbReference>
<dbReference type="Pfam" id="PF05166">
    <property type="entry name" value="YcgL"/>
    <property type="match status" value="1"/>
</dbReference>
<dbReference type="SUPFAM" id="SSF160191">
    <property type="entry name" value="YcgL-like"/>
    <property type="match status" value="1"/>
</dbReference>
<dbReference type="PROSITE" id="PS51648">
    <property type="entry name" value="YCGL"/>
    <property type="match status" value="1"/>
</dbReference>
<organism>
    <name type="scientific">Shewanella sediminis (strain HAW-EB3)</name>
    <dbReference type="NCBI Taxonomy" id="425104"/>
    <lineage>
        <taxon>Bacteria</taxon>
        <taxon>Pseudomonadati</taxon>
        <taxon>Pseudomonadota</taxon>
        <taxon>Gammaproteobacteria</taxon>
        <taxon>Alteromonadales</taxon>
        <taxon>Shewanellaceae</taxon>
        <taxon>Shewanella</taxon>
    </lineage>
</organism>
<feature type="chain" id="PRO_0000375376" description="YcgL domain-containing protein Ssed_2518">
    <location>
        <begin position="1"/>
        <end position="93"/>
    </location>
</feature>
<feature type="domain" description="YcgL" evidence="1">
    <location>
        <begin position="1"/>
        <end position="85"/>
    </location>
</feature>
<evidence type="ECO:0000255" key="1">
    <source>
        <dbReference type="HAMAP-Rule" id="MF_01866"/>
    </source>
</evidence>
<accession>A8FWA2</accession>
<protein>
    <recommendedName>
        <fullName evidence="1">YcgL domain-containing protein Ssed_2518</fullName>
    </recommendedName>
</protein>
<gene>
    <name type="ordered locus">Ssed_2518</name>
</gene>